<reference key="1">
    <citation type="journal article" date="2008" name="Proc. Natl. Acad. Sci. U.S.A.">
        <title>The genome of Cyanothece 51142, a unicellular diazotrophic cyanobacterium important in the marine nitrogen cycle.</title>
        <authorList>
            <person name="Welsh E.A."/>
            <person name="Liberton M."/>
            <person name="Stoeckel J."/>
            <person name="Loh T."/>
            <person name="Elvitigala T."/>
            <person name="Wang C."/>
            <person name="Wollam A."/>
            <person name="Fulton R.S."/>
            <person name="Clifton S.W."/>
            <person name="Jacobs J.M."/>
            <person name="Aurora R."/>
            <person name="Ghosh B.K."/>
            <person name="Sherman L.A."/>
            <person name="Smith R.D."/>
            <person name="Wilson R.K."/>
            <person name="Pakrasi H.B."/>
        </authorList>
    </citation>
    <scope>NUCLEOTIDE SEQUENCE [LARGE SCALE GENOMIC DNA]</scope>
    <source>
        <strain>ATCC 51142 / BH68</strain>
    </source>
</reference>
<feature type="chain" id="PRO_0000368448" description="ATP synthase subunit b 2">
    <location>
        <begin position="1"/>
        <end position="244"/>
    </location>
</feature>
<feature type="transmembrane region" description="Helical" evidence="1">
    <location>
        <begin position="2"/>
        <end position="22"/>
    </location>
</feature>
<evidence type="ECO:0000255" key="1">
    <source>
        <dbReference type="HAMAP-Rule" id="MF_01398"/>
    </source>
</evidence>
<evidence type="ECO:0000305" key="2"/>
<accession>B1WXB2</accession>
<keyword id="KW-0066">ATP synthesis</keyword>
<keyword id="KW-0138">CF(0)</keyword>
<keyword id="KW-0375">Hydrogen ion transport</keyword>
<keyword id="KW-0406">Ion transport</keyword>
<keyword id="KW-0472">Membrane</keyword>
<keyword id="KW-1185">Reference proteome</keyword>
<keyword id="KW-0793">Thylakoid</keyword>
<keyword id="KW-0812">Transmembrane</keyword>
<keyword id="KW-1133">Transmembrane helix</keyword>
<keyword id="KW-0813">Transport</keyword>
<protein>
    <recommendedName>
        <fullName evidence="1">ATP synthase subunit b 2</fullName>
    </recommendedName>
    <alternativeName>
        <fullName evidence="1">ATP synthase F(0) sector subunit b 2</fullName>
    </alternativeName>
    <alternativeName>
        <fullName evidence="1">ATPase subunit I 2</fullName>
    </alternativeName>
    <alternativeName>
        <fullName evidence="1">F-type ATPase subunit b 2</fullName>
        <shortName evidence="1">F-ATPase subunit b 2</shortName>
    </alternativeName>
</protein>
<comment type="function">
    <text evidence="1">F(1)F(0) ATP synthase produces ATP from ADP in the presence of a proton or sodium gradient. F-type ATPases consist of two structural domains, F(1) containing the extramembraneous catalytic core and F(0) containing the membrane proton channel, linked together by a central stalk and a peripheral stalk. During catalysis, ATP synthesis in the catalytic domain of F(1) is coupled via a rotary mechanism of the central stalk subunits to proton translocation.</text>
</comment>
<comment type="function">
    <text evidence="1">Component of the F(0) channel, it forms part of the peripheral stalk, linking F(1) to F(0).</text>
</comment>
<comment type="subunit">
    <text evidence="1">F-type ATPases have 2 components, F(1) - the catalytic core - and F(0) - the membrane proton channel. F(1) has five subunits: alpha(3), beta(3), gamma(1), delta(1), epsilon(1). F(0) has four main subunits: a(1), b(1), b'(1) and c(10-14). The alpha and beta chains form an alternating ring which encloses part of the gamma chain. F(1) is attached to F(0) by a central stalk formed by the gamma and epsilon chains, while a peripheral stalk is formed by the delta, b and b' chains.</text>
</comment>
<comment type="subcellular location">
    <subcellularLocation>
        <location evidence="1">Cellular thylakoid membrane</location>
        <topology evidence="1">Single-pass membrane protein</topology>
    </subcellularLocation>
</comment>
<comment type="similarity">
    <text evidence="1">Belongs to the ATPase B chain family.</text>
</comment>
<dbReference type="EMBL" id="CP000806">
    <property type="protein sequence ID" value="ACB50856.1"/>
    <property type="molecule type" value="Genomic_DNA"/>
</dbReference>
<dbReference type="RefSeq" id="WP_009544312.1">
    <property type="nucleotide sequence ID" value="NC_010546.1"/>
</dbReference>
<dbReference type="SMR" id="B1WXB2"/>
<dbReference type="STRING" id="43989.cce_1506"/>
<dbReference type="KEGG" id="cyt:cce_1506"/>
<dbReference type="eggNOG" id="COG0711">
    <property type="taxonomic scope" value="Bacteria"/>
</dbReference>
<dbReference type="HOGENOM" id="CLU_070737_0_0_3"/>
<dbReference type="OrthoDB" id="466272at2"/>
<dbReference type="Proteomes" id="UP000001203">
    <property type="component" value="Chromosome circular"/>
</dbReference>
<dbReference type="GO" id="GO:0031676">
    <property type="term" value="C:plasma membrane-derived thylakoid membrane"/>
    <property type="evidence" value="ECO:0007669"/>
    <property type="project" value="UniProtKB-SubCell"/>
</dbReference>
<dbReference type="GO" id="GO:0045259">
    <property type="term" value="C:proton-transporting ATP synthase complex"/>
    <property type="evidence" value="ECO:0007669"/>
    <property type="project" value="UniProtKB-KW"/>
</dbReference>
<dbReference type="GO" id="GO:0046933">
    <property type="term" value="F:proton-transporting ATP synthase activity, rotational mechanism"/>
    <property type="evidence" value="ECO:0007669"/>
    <property type="project" value="UniProtKB-UniRule"/>
</dbReference>
<dbReference type="GO" id="GO:0046961">
    <property type="term" value="F:proton-transporting ATPase activity, rotational mechanism"/>
    <property type="evidence" value="ECO:0007669"/>
    <property type="project" value="TreeGrafter"/>
</dbReference>
<dbReference type="CDD" id="cd06503">
    <property type="entry name" value="ATP-synt_Fo_b"/>
    <property type="match status" value="1"/>
</dbReference>
<dbReference type="HAMAP" id="MF_01398">
    <property type="entry name" value="ATP_synth_b_bprime"/>
    <property type="match status" value="1"/>
</dbReference>
<dbReference type="InterPro" id="IPR017707">
    <property type="entry name" value="Alt_ATP_synth_F0_bsu"/>
</dbReference>
<dbReference type="InterPro" id="IPR002146">
    <property type="entry name" value="ATP_synth_b/b'su_bac/chlpt"/>
</dbReference>
<dbReference type="InterPro" id="IPR050059">
    <property type="entry name" value="ATP_synthase_B_chain"/>
</dbReference>
<dbReference type="NCBIfam" id="TIGR03321">
    <property type="entry name" value="alt_F1F0_F0_B"/>
    <property type="match status" value="1"/>
</dbReference>
<dbReference type="NCBIfam" id="NF011044">
    <property type="entry name" value="PRK14474.1"/>
    <property type="match status" value="1"/>
</dbReference>
<dbReference type="PANTHER" id="PTHR33445">
    <property type="entry name" value="ATP SYNTHASE SUBUNIT B', CHLOROPLASTIC"/>
    <property type="match status" value="1"/>
</dbReference>
<dbReference type="PANTHER" id="PTHR33445:SF2">
    <property type="entry name" value="ATP SYNTHASE SUBUNIT B', CHLOROPLASTIC"/>
    <property type="match status" value="1"/>
</dbReference>
<dbReference type="Pfam" id="PF00430">
    <property type="entry name" value="ATP-synt_B"/>
    <property type="match status" value="1"/>
</dbReference>
<gene>
    <name evidence="1 2" type="primary">atpF3</name>
    <name type="ordered locus">cce_1506</name>
</gene>
<name>ATPF3_CROS5</name>
<sequence length="244" mass="28929">MLIDWFTIVAQIINFLILVFLLNRFLYKPIVKTIKARQQEIENRWQDAEKEKKSAKNEANSYQKKQQELEEKKQEIMIQAQTKADEKYDNLVEEARQDVEQKRKTWDESLEREKAQFFDRFQEKIMQQIYKITGHVLGDLANASLEQQIINQFIHRLENLSEKERENLANSLNTTDNGLIIRSHFEISPESRNRLLSSLQQTHIYQGDNVQFMTNSDLICGIELQASDYKIAWNLKDYVEALEI</sequence>
<proteinExistence type="inferred from homology"/>
<organism>
    <name type="scientific">Crocosphaera subtropica (strain ATCC 51142 / BH68)</name>
    <name type="common">Cyanothece sp. (strain ATCC 51142)</name>
    <dbReference type="NCBI Taxonomy" id="43989"/>
    <lineage>
        <taxon>Bacteria</taxon>
        <taxon>Bacillati</taxon>
        <taxon>Cyanobacteriota</taxon>
        <taxon>Cyanophyceae</taxon>
        <taxon>Oscillatoriophycideae</taxon>
        <taxon>Chroococcales</taxon>
        <taxon>Aphanothecaceae</taxon>
        <taxon>Crocosphaera</taxon>
        <taxon>Crocosphaera subtropica</taxon>
    </lineage>
</organism>